<geneLocation type="non-photosynthetic plastid"/>
<proteinExistence type="inferred from homology"/>
<reference key="1">
    <citation type="journal article" date="2008" name="Mol. Biol. Evol.">
        <title>Functional gene losses occur with minimal size reduction in the plastid genome of the parasitic liverwort Aneura mirabilis.</title>
        <authorList>
            <person name="Wickett N.J."/>
            <person name="Zhang Y."/>
            <person name="Hansen S.K."/>
            <person name="Roper J.M."/>
            <person name="Kuehl J.V."/>
            <person name="Plock S.A."/>
            <person name="Wolf P.G."/>
            <person name="dePamphilis C.W."/>
            <person name="Boore J.L."/>
            <person name="Goffinet B."/>
        </authorList>
    </citation>
    <scope>NUCLEOTIDE SEQUENCE [LARGE SCALE GENOMIC DNA]</scope>
</reference>
<comment type="function">
    <text evidence="2">Produces ATP from ADP in the presence of a proton gradient across the membrane. The catalytic sites are hosted primarily by the beta subunits.</text>
</comment>
<comment type="catalytic activity">
    <reaction evidence="2">
        <text>ATP + H2O + 4 H(+)(in) = ADP + phosphate + 5 H(+)(out)</text>
        <dbReference type="Rhea" id="RHEA:57720"/>
        <dbReference type="ChEBI" id="CHEBI:15377"/>
        <dbReference type="ChEBI" id="CHEBI:15378"/>
        <dbReference type="ChEBI" id="CHEBI:30616"/>
        <dbReference type="ChEBI" id="CHEBI:43474"/>
        <dbReference type="ChEBI" id="CHEBI:456216"/>
        <dbReference type="EC" id="7.1.2.2"/>
    </reaction>
</comment>
<comment type="subunit">
    <text evidence="2">F-type ATPases have 2 components, CF(1) - the catalytic core - and CF(0) - the membrane proton channel. CF(1) has five subunits: alpha(3), beta(3), gamma(1), delta(1), epsilon(1). CF(0) has four main subunits: a(1), b(1), b'(1) and c(9-12).</text>
</comment>
<comment type="subcellular location">
    <subcellularLocation>
        <location evidence="1">Plastid membrane</location>
        <topology evidence="2">Peripheral membrane protein</topology>
    </subcellularLocation>
</comment>
<comment type="similarity">
    <text evidence="2">Belongs to the ATPase alpha/beta chains family.</text>
</comment>
<sequence length="492" mass="52849">MINNPSLLGTSIPVTKNVGSITQIIGPVLDIVFSPGKMPNIYNSLIVRGQNSAGQEINVTCEVQQLLGNNEVRAVATSATDGLMREMEVLDTGAPSSVPVGEATLGRIFNVLGEAVDNLGPVDAGLTSPIHRAAPSFIQLDTKLSIFETGIKVVDLLVPYRRGGKIGLFGGAGVGKTVLIMELINNIAKAHGGVSVFGGVGERTREGNDLYMEMKESKVINEQNIAESKVALVYGQMNEPPGARMRVGSTALTMAEYFRDVNKQDVLLFIDNIFRFVQAGSEVSALLGRMPSAVGYQPTLGTEMGTLQERITSTKEGSITSIQAVYVPADDLTDPAPATTFAHLDATTVLSRGLAAKGIYPAVDPLDSTSTMLQPWIVGEEHYETAQGVKQTLQRYKELQDIIAIPGLDELSEEDRLTVARARRIERFLSQPFFVAEVFTGSPGKYVSLRETIKGFQMILAGELDNLPEQAFYLVGNIDEVAAKAVVSQSGD</sequence>
<organism>
    <name type="scientific">Aneura mirabilis</name>
    <name type="common">Parasitic liverwort</name>
    <name type="synonym">Cryptothallus mirabilis</name>
    <dbReference type="NCBI Taxonomy" id="280810"/>
    <lineage>
        <taxon>Eukaryota</taxon>
        <taxon>Viridiplantae</taxon>
        <taxon>Streptophyta</taxon>
        <taxon>Embryophyta</taxon>
        <taxon>Marchantiophyta</taxon>
        <taxon>Jungermanniopsida</taxon>
        <taxon>Metzgeriidae</taxon>
        <taxon>Metzgeriales</taxon>
        <taxon>Aneuraceae</taxon>
        <taxon>Aneura</taxon>
    </lineage>
</organism>
<accession>B0YPN7</accession>
<dbReference type="EC" id="7.1.2.2" evidence="2"/>
<dbReference type="EMBL" id="EU043314">
    <property type="protein sequence ID" value="ABS54484.1"/>
    <property type="molecule type" value="Genomic_DNA"/>
</dbReference>
<dbReference type="RefSeq" id="YP_001687223.1">
    <property type="nucleotide sequence ID" value="NC_010359.1"/>
</dbReference>
<dbReference type="SMR" id="B0YPN7"/>
<dbReference type="GeneID" id="5952226"/>
<dbReference type="GO" id="GO:0009535">
    <property type="term" value="C:chloroplast thylakoid membrane"/>
    <property type="evidence" value="ECO:0007669"/>
    <property type="project" value="TreeGrafter"/>
</dbReference>
<dbReference type="GO" id="GO:0005739">
    <property type="term" value="C:mitochondrion"/>
    <property type="evidence" value="ECO:0007669"/>
    <property type="project" value="GOC"/>
</dbReference>
<dbReference type="GO" id="GO:0045259">
    <property type="term" value="C:proton-transporting ATP synthase complex"/>
    <property type="evidence" value="ECO:0007669"/>
    <property type="project" value="UniProtKB-KW"/>
</dbReference>
<dbReference type="GO" id="GO:0005524">
    <property type="term" value="F:ATP binding"/>
    <property type="evidence" value="ECO:0007669"/>
    <property type="project" value="UniProtKB-KW"/>
</dbReference>
<dbReference type="GO" id="GO:0016887">
    <property type="term" value="F:ATP hydrolysis activity"/>
    <property type="evidence" value="ECO:0007669"/>
    <property type="project" value="InterPro"/>
</dbReference>
<dbReference type="GO" id="GO:0046933">
    <property type="term" value="F:proton-transporting ATP synthase activity, rotational mechanism"/>
    <property type="evidence" value="ECO:0007669"/>
    <property type="project" value="InterPro"/>
</dbReference>
<dbReference type="GO" id="GO:0042776">
    <property type="term" value="P:proton motive force-driven mitochondrial ATP synthesis"/>
    <property type="evidence" value="ECO:0007669"/>
    <property type="project" value="TreeGrafter"/>
</dbReference>
<dbReference type="CDD" id="cd18110">
    <property type="entry name" value="ATP-synt_F1_beta_C"/>
    <property type="match status" value="1"/>
</dbReference>
<dbReference type="CDD" id="cd18115">
    <property type="entry name" value="ATP-synt_F1_beta_N"/>
    <property type="match status" value="1"/>
</dbReference>
<dbReference type="CDD" id="cd01133">
    <property type="entry name" value="F1-ATPase_beta_CD"/>
    <property type="match status" value="1"/>
</dbReference>
<dbReference type="FunFam" id="1.10.1140.10:FF:000001">
    <property type="entry name" value="ATP synthase subunit beta"/>
    <property type="match status" value="1"/>
</dbReference>
<dbReference type="FunFam" id="3.40.50.12240:FF:000006">
    <property type="entry name" value="ATP synthase subunit beta"/>
    <property type="match status" value="1"/>
</dbReference>
<dbReference type="FunFam" id="3.40.50.300:FF:000004">
    <property type="entry name" value="ATP synthase subunit beta"/>
    <property type="match status" value="1"/>
</dbReference>
<dbReference type="FunFam" id="2.40.10.170:FF:000002">
    <property type="entry name" value="ATP synthase subunit beta, chloroplastic"/>
    <property type="match status" value="1"/>
</dbReference>
<dbReference type="Gene3D" id="2.40.10.170">
    <property type="match status" value="1"/>
</dbReference>
<dbReference type="Gene3D" id="1.10.1140.10">
    <property type="entry name" value="Bovine Mitochondrial F1-atpase, Atp Synthase Beta Chain, Chain D, domain 3"/>
    <property type="match status" value="1"/>
</dbReference>
<dbReference type="Gene3D" id="3.40.50.300">
    <property type="entry name" value="P-loop containing nucleotide triphosphate hydrolases"/>
    <property type="match status" value="1"/>
</dbReference>
<dbReference type="HAMAP" id="MF_01347">
    <property type="entry name" value="ATP_synth_beta_bact"/>
    <property type="match status" value="1"/>
</dbReference>
<dbReference type="InterPro" id="IPR003593">
    <property type="entry name" value="AAA+_ATPase"/>
</dbReference>
<dbReference type="InterPro" id="IPR055190">
    <property type="entry name" value="ATP-synt_VA_C"/>
</dbReference>
<dbReference type="InterPro" id="IPR005722">
    <property type="entry name" value="ATP_synth_F1_bsu"/>
</dbReference>
<dbReference type="InterPro" id="IPR020003">
    <property type="entry name" value="ATPase_a/bsu_AS"/>
</dbReference>
<dbReference type="InterPro" id="IPR050053">
    <property type="entry name" value="ATPase_alpha/beta_chains"/>
</dbReference>
<dbReference type="InterPro" id="IPR004100">
    <property type="entry name" value="ATPase_F1/V1/A1_a/bsu_N"/>
</dbReference>
<dbReference type="InterPro" id="IPR036121">
    <property type="entry name" value="ATPase_F1/V1/A1_a/bsu_N_sf"/>
</dbReference>
<dbReference type="InterPro" id="IPR000194">
    <property type="entry name" value="ATPase_F1/V1/A1_a/bsu_nucl-bd"/>
</dbReference>
<dbReference type="InterPro" id="IPR024034">
    <property type="entry name" value="ATPase_F1/V1_b/a_C"/>
</dbReference>
<dbReference type="InterPro" id="IPR027417">
    <property type="entry name" value="P-loop_NTPase"/>
</dbReference>
<dbReference type="NCBIfam" id="TIGR01039">
    <property type="entry name" value="atpD"/>
    <property type="match status" value="1"/>
</dbReference>
<dbReference type="PANTHER" id="PTHR15184">
    <property type="entry name" value="ATP SYNTHASE"/>
    <property type="match status" value="1"/>
</dbReference>
<dbReference type="PANTHER" id="PTHR15184:SF71">
    <property type="entry name" value="ATP SYNTHASE SUBUNIT BETA, MITOCHONDRIAL"/>
    <property type="match status" value="1"/>
</dbReference>
<dbReference type="Pfam" id="PF00006">
    <property type="entry name" value="ATP-synt_ab"/>
    <property type="match status" value="1"/>
</dbReference>
<dbReference type="Pfam" id="PF02874">
    <property type="entry name" value="ATP-synt_ab_N"/>
    <property type="match status" value="1"/>
</dbReference>
<dbReference type="Pfam" id="PF22919">
    <property type="entry name" value="ATP-synt_VA_C"/>
    <property type="match status" value="1"/>
</dbReference>
<dbReference type="SMART" id="SM00382">
    <property type="entry name" value="AAA"/>
    <property type="match status" value="1"/>
</dbReference>
<dbReference type="SUPFAM" id="SSF47917">
    <property type="entry name" value="C-terminal domain of alpha and beta subunits of F1 ATP synthase"/>
    <property type="match status" value="1"/>
</dbReference>
<dbReference type="SUPFAM" id="SSF50615">
    <property type="entry name" value="N-terminal domain of alpha and beta subunits of F1 ATP synthase"/>
    <property type="match status" value="1"/>
</dbReference>
<dbReference type="SUPFAM" id="SSF52540">
    <property type="entry name" value="P-loop containing nucleoside triphosphate hydrolases"/>
    <property type="match status" value="1"/>
</dbReference>
<dbReference type="PROSITE" id="PS00152">
    <property type="entry name" value="ATPASE_ALPHA_BETA"/>
    <property type="match status" value="1"/>
</dbReference>
<keyword id="KW-0066">ATP synthesis</keyword>
<keyword id="KW-0067">ATP-binding</keyword>
<keyword id="KW-0139">CF(1)</keyword>
<keyword id="KW-0375">Hydrogen ion transport</keyword>
<keyword id="KW-0406">Ion transport</keyword>
<keyword id="KW-0472">Membrane</keyword>
<keyword id="KW-0547">Nucleotide-binding</keyword>
<keyword id="KW-0934">Plastid</keyword>
<keyword id="KW-1278">Translocase</keyword>
<keyword id="KW-0813">Transport</keyword>
<protein>
    <recommendedName>
        <fullName evidence="2">ATP synthase subunit beta, plastid</fullName>
        <ecNumber evidence="2">7.1.2.2</ecNumber>
    </recommendedName>
    <alternativeName>
        <fullName evidence="2">ATP synthase F1 sector subunit beta</fullName>
    </alternativeName>
    <alternativeName>
        <fullName evidence="2">F-ATPase subunit beta</fullName>
    </alternativeName>
</protein>
<feature type="chain" id="PRO_0000339604" description="ATP synthase subunit beta, plastid">
    <location>
        <begin position="1"/>
        <end position="492"/>
    </location>
</feature>
<feature type="binding site" evidence="2">
    <location>
        <begin position="170"/>
        <end position="177"/>
    </location>
    <ligand>
        <name>ATP</name>
        <dbReference type="ChEBI" id="CHEBI:30616"/>
    </ligand>
</feature>
<name>ATPB_ANEMR</name>
<gene>
    <name evidence="2" type="primary">atpB</name>
</gene>
<evidence type="ECO:0000250" key="1"/>
<evidence type="ECO:0000255" key="2">
    <source>
        <dbReference type="HAMAP-Rule" id="MF_01347"/>
    </source>
</evidence>